<comment type="function">
    <text evidence="1">Probable transcription factor.</text>
</comment>
<comment type="subcellular location">
    <subcellularLocation>
        <location evidence="1">Nucleus</location>
    </subcellularLocation>
</comment>
<comment type="alternative products">
    <event type="alternative splicing"/>
    <isoform>
        <id>Q1A173-1</id>
        <name>1</name>
        <sequence type="displayed"/>
    </isoform>
    <isoform>
        <id>Q1A173-2</id>
        <name>2</name>
        <sequence type="described" ref="VSP_044170"/>
    </isoform>
</comment>
<comment type="tissue specificity">
    <text evidence="2">Expressed in the micropylar endosperm surrounding globular-stage embryos but no expression was detected elsewhere, including floral tissues.</text>
</comment>
<comment type="miscellaneous">
    <text evidence="6">Assigned as a member of the MYB-related gene family, I-box-binding-like subfamily.</text>
</comment>
<comment type="miscellaneous">
    <molecule>Isoform 2</molecule>
    <text evidence="5">May be due to an intron retention.</text>
</comment>
<evidence type="ECO:0000250" key="1"/>
<evidence type="ECO:0000269" key="2">
    <source>
    </source>
</evidence>
<evidence type="ECO:0000303" key="3">
    <source ref="1"/>
</evidence>
<evidence type="ECO:0000303" key="4">
    <source ref="5"/>
</evidence>
<evidence type="ECO:0000305" key="5"/>
<evidence type="ECO:0000305" key="6">
    <source>
    </source>
</evidence>
<dbReference type="EMBL" id="AY519525">
    <property type="protein sequence ID" value="AAS09995.1"/>
    <property type="molecule type" value="mRNA"/>
</dbReference>
<dbReference type="EMBL" id="DQ395346">
    <property type="protein sequence ID" value="ABD24442.1"/>
    <property type="molecule type" value="mRNA"/>
</dbReference>
<dbReference type="EMBL" id="AC025814">
    <property type="protein sequence ID" value="AAG12684.1"/>
    <property type="molecule type" value="Genomic_DNA"/>
</dbReference>
<dbReference type="EMBL" id="CP002684">
    <property type="protein sequence ID" value="AEE35693.1"/>
    <property type="molecule type" value="Genomic_DNA"/>
</dbReference>
<dbReference type="EMBL" id="CP002684">
    <property type="protein sequence ID" value="AEE35694.1"/>
    <property type="molecule type" value="Genomic_DNA"/>
</dbReference>
<dbReference type="EMBL" id="BT026091">
    <property type="protein sequence ID" value="ABG48447.1"/>
    <property type="molecule type" value="mRNA"/>
</dbReference>
<dbReference type="PIR" id="H96782">
    <property type="entry name" value="H96782"/>
</dbReference>
<dbReference type="RefSeq" id="NP_001077825.1">
    <molecule id="Q1A173-1"/>
    <property type="nucleotide sequence ID" value="NM_001084356.3"/>
</dbReference>
<dbReference type="RefSeq" id="NP_177661.1">
    <molecule id="Q1A173-2"/>
    <property type="nucleotide sequence ID" value="NM_106181.2"/>
</dbReference>
<dbReference type="SMR" id="Q1A173"/>
<dbReference type="BioGRID" id="29081">
    <property type="interactions" value="2"/>
</dbReference>
<dbReference type="FunCoup" id="Q1A173">
    <property type="interactions" value="2"/>
</dbReference>
<dbReference type="IntAct" id="Q1A173">
    <property type="interactions" value="1"/>
</dbReference>
<dbReference type="STRING" id="3702.Q1A173"/>
<dbReference type="PaxDb" id="3702-AT1G75250.1"/>
<dbReference type="EnsemblPlants" id="AT1G75250.1">
    <molecule id="Q1A173-2"/>
    <property type="protein sequence ID" value="AT1G75250.1"/>
    <property type="gene ID" value="AT1G75250"/>
</dbReference>
<dbReference type="EnsemblPlants" id="AT1G75250.2">
    <molecule id="Q1A173-1"/>
    <property type="protein sequence ID" value="AT1G75250.2"/>
    <property type="gene ID" value="AT1G75250"/>
</dbReference>
<dbReference type="GeneID" id="843862"/>
<dbReference type="Gramene" id="AT1G75250.1">
    <molecule id="Q1A173-2"/>
    <property type="protein sequence ID" value="AT1G75250.1"/>
    <property type="gene ID" value="AT1G75250"/>
</dbReference>
<dbReference type="Gramene" id="AT1G75250.2">
    <molecule id="Q1A173-1"/>
    <property type="protein sequence ID" value="AT1G75250.2"/>
    <property type="gene ID" value="AT1G75250"/>
</dbReference>
<dbReference type="KEGG" id="ath:AT1G75250"/>
<dbReference type="Araport" id="AT1G75250"/>
<dbReference type="TAIR" id="AT1G75250">
    <property type="gene designation" value="RL6"/>
</dbReference>
<dbReference type="eggNOG" id="KOG0724">
    <property type="taxonomic scope" value="Eukaryota"/>
</dbReference>
<dbReference type="HOGENOM" id="CLU_137624_1_2_1"/>
<dbReference type="InParanoid" id="Q1A173"/>
<dbReference type="OMA" id="NWTKNQN"/>
<dbReference type="OrthoDB" id="118550at2759"/>
<dbReference type="PhylomeDB" id="Q1A173"/>
<dbReference type="PRO" id="PR:Q1A173"/>
<dbReference type="Proteomes" id="UP000006548">
    <property type="component" value="Chromosome 1"/>
</dbReference>
<dbReference type="ExpressionAtlas" id="Q1A173">
    <property type="expression patterns" value="baseline and differential"/>
</dbReference>
<dbReference type="GO" id="GO:0005634">
    <property type="term" value="C:nucleus"/>
    <property type="evidence" value="ECO:0007669"/>
    <property type="project" value="UniProtKB-SubCell"/>
</dbReference>
<dbReference type="GO" id="GO:0003700">
    <property type="term" value="F:DNA-binding transcription factor activity"/>
    <property type="evidence" value="ECO:0000250"/>
    <property type="project" value="TAIR"/>
</dbReference>
<dbReference type="GO" id="GO:0006355">
    <property type="term" value="P:regulation of DNA-templated transcription"/>
    <property type="evidence" value="ECO:0000304"/>
    <property type="project" value="TAIR"/>
</dbReference>
<dbReference type="CDD" id="cd00167">
    <property type="entry name" value="SANT"/>
    <property type="match status" value="1"/>
</dbReference>
<dbReference type="FunFam" id="1.10.10.60:FF:000154">
    <property type="entry name" value="Transcription factor SRM1"/>
    <property type="match status" value="1"/>
</dbReference>
<dbReference type="Gene3D" id="1.10.10.60">
    <property type="entry name" value="Homeodomain-like"/>
    <property type="match status" value="1"/>
</dbReference>
<dbReference type="InterPro" id="IPR009057">
    <property type="entry name" value="Homeodomain-like_sf"/>
</dbReference>
<dbReference type="InterPro" id="IPR044636">
    <property type="entry name" value="RADIALIS-like"/>
</dbReference>
<dbReference type="InterPro" id="IPR001005">
    <property type="entry name" value="SANT/Myb"/>
</dbReference>
<dbReference type="PANTHER" id="PTHR43952">
    <property type="entry name" value="MYB FAMILY TRANSCRIPTION FACTOR-RELATED"/>
    <property type="match status" value="1"/>
</dbReference>
<dbReference type="PANTHER" id="PTHR43952:SF75">
    <property type="entry name" value="PROTEIN RADIALIS-LIKE 6"/>
    <property type="match status" value="1"/>
</dbReference>
<dbReference type="Pfam" id="PF00249">
    <property type="entry name" value="Myb_DNA-binding"/>
    <property type="match status" value="1"/>
</dbReference>
<dbReference type="SMART" id="SM00717">
    <property type="entry name" value="SANT"/>
    <property type="match status" value="1"/>
</dbReference>
<dbReference type="SUPFAM" id="SSF46689">
    <property type="entry name" value="Homeodomain-like"/>
    <property type="match status" value="1"/>
</dbReference>
<gene>
    <name type="primary">RL6</name>
    <name type="synonym">RSM3</name>
    <name type="ordered locus">At1g75250</name>
    <name type="ORF">F22H5.3</name>
</gene>
<accession>Q1A173</accession>
<accession>Q9FRL6</accession>
<name>RADL6_ARATH</name>
<organism>
    <name type="scientific">Arabidopsis thaliana</name>
    <name type="common">Mouse-ear cress</name>
    <dbReference type="NCBI Taxonomy" id="3702"/>
    <lineage>
        <taxon>Eukaryota</taxon>
        <taxon>Viridiplantae</taxon>
        <taxon>Streptophyta</taxon>
        <taxon>Embryophyta</taxon>
        <taxon>Tracheophyta</taxon>
        <taxon>Spermatophyta</taxon>
        <taxon>Magnoliopsida</taxon>
        <taxon>eudicotyledons</taxon>
        <taxon>Gunneridae</taxon>
        <taxon>Pentapetalae</taxon>
        <taxon>rosids</taxon>
        <taxon>malvids</taxon>
        <taxon>Brassicales</taxon>
        <taxon>Brassicaceae</taxon>
        <taxon>Camelineae</taxon>
        <taxon>Arabidopsis</taxon>
    </lineage>
</organism>
<protein>
    <recommendedName>
        <fullName>Protein RADIALIS-like 6</fullName>
        <shortName>AtRL6</shortName>
        <shortName>Protein RAD-like 6</shortName>
    </recommendedName>
    <alternativeName>
        <fullName>Protein RADIALIS-LIKE SANT/MYB 3</fullName>
        <shortName>Protein RSM3</shortName>
    </alternativeName>
</protein>
<keyword id="KW-0025">Alternative splicing</keyword>
<keyword id="KW-0539">Nucleus</keyword>
<keyword id="KW-1185">Reference proteome</keyword>
<keyword id="KW-0804">Transcription</keyword>
<keyword id="KW-0805">Transcription regulation</keyword>
<sequence length="97" mass="11249">MASNSRSSISPWTFSQNKMFERALAVYDKDTPDRWHNVAKAVGGKTVEEVKRHYDILVEDLINIETGRVPLPNYKTFESNSRSINDFDTRKMKNLKI</sequence>
<feature type="chain" id="PRO_0000419446" description="Protein RADIALIS-like 6">
    <location>
        <begin position="1"/>
        <end position="97"/>
    </location>
</feature>
<feature type="domain" description="SANT">
    <location>
        <begin position="7"/>
        <end position="59"/>
    </location>
</feature>
<feature type="splice variant" id="VSP_044170" description="In isoform 2." evidence="3 4">
    <original>KMKNLKI</original>
    <variation>YITKYLYMMLSIYFDNHSSDFEKFSQKVLVSYISLV</variation>
    <location>
        <begin position="91"/>
        <end position="97"/>
    </location>
</feature>
<proteinExistence type="evidence at transcript level"/>
<reference key="1">
    <citation type="submission" date="2004-01" db="EMBL/GenBank/DDBJ databases">
        <title>The MYB transcription factor family in Arabidopsis: a genome-wide cloning and expression pattern analysis.</title>
        <authorList>
            <person name="Qu L.-J."/>
            <person name="Gu H."/>
        </authorList>
    </citation>
    <scope>NUCLEOTIDE SEQUENCE [LARGE SCALE MRNA] (ISOFORM 2)</scope>
</reference>
<reference key="2">
    <citation type="journal article" date="2007" name="Plant J.">
        <title>Diversification and co-option of RAD-like genes in the evolution of floral asymmetry.</title>
        <authorList>
            <person name="Baxter C.E.L."/>
            <person name="Costa M.M.R."/>
            <person name="Coen E.S."/>
        </authorList>
    </citation>
    <scope>NUCLEOTIDE SEQUENCE [MRNA] (ISOFORM 1)</scope>
    <scope>GENE FAMILY</scope>
    <scope>TISSUE SPECIFICITY</scope>
</reference>
<reference key="3">
    <citation type="journal article" date="2000" name="Nature">
        <title>Sequence and analysis of chromosome 1 of the plant Arabidopsis thaliana.</title>
        <authorList>
            <person name="Theologis A."/>
            <person name="Ecker J.R."/>
            <person name="Palm C.J."/>
            <person name="Federspiel N.A."/>
            <person name="Kaul S."/>
            <person name="White O."/>
            <person name="Alonso J."/>
            <person name="Altafi H."/>
            <person name="Araujo R."/>
            <person name="Bowman C.L."/>
            <person name="Brooks S.Y."/>
            <person name="Buehler E."/>
            <person name="Chan A."/>
            <person name="Chao Q."/>
            <person name="Chen H."/>
            <person name="Cheuk R.F."/>
            <person name="Chin C.W."/>
            <person name="Chung M.K."/>
            <person name="Conn L."/>
            <person name="Conway A.B."/>
            <person name="Conway A.R."/>
            <person name="Creasy T.H."/>
            <person name="Dewar K."/>
            <person name="Dunn P."/>
            <person name="Etgu P."/>
            <person name="Feldblyum T.V."/>
            <person name="Feng J.-D."/>
            <person name="Fong B."/>
            <person name="Fujii C.Y."/>
            <person name="Gill J.E."/>
            <person name="Goldsmith A.D."/>
            <person name="Haas B."/>
            <person name="Hansen N.F."/>
            <person name="Hughes B."/>
            <person name="Huizar L."/>
            <person name="Hunter J.L."/>
            <person name="Jenkins J."/>
            <person name="Johnson-Hopson C."/>
            <person name="Khan S."/>
            <person name="Khaykin E."/>
            <person name="Kim C.J."/>
            <person name="Koo H.L."/>
            <person name="Kremenetskaia I."/>
            <person name="Kurtz D.B."/>
            <person name="Kwan A."/>
            <person name="Lam B."/>
            <person name="Langin-Hooper S."/>
            <person name="Lee A."/>
            <person name="Lee J.M."/>
            <person name="Lenz C.A."/>
            <person name="Li J.H."/>
            <person name="Li Y.-P."/>
            <person name="Lin X."/>
            <person name="Liu S.X."/>
            <person name="Liu Z.A."/>
            <person name="Luros J.S."/>
            <person name="Maiti R."/>
            <person name="Marziali A."/>
            <person name="Militscher J."/>
            <person name="Miranda M."/>
            <person name="Nguyen M."/>
            <person name="Nierman W.C."/>
            <person name="Osborne B.I."/>
            <person name="Pai G."/>
            <person name="Peterson J."/>
            <person name="Pham P.K."/>
            <person name="Rizzo M."/>
            <person name="Rooney T."/>
            <person name="Rowley D."/>
            <person name="Sakano H."/>
            <person name="Salzberg S.L."/>
            <person name="Schwartz J.R."/>
            <person name="Shinn P."/>
            <person name="Southwick A.M."/>
            <person name="Sun H."/>
            <person name="Tallon L.J."/>
            <person name="Tambunga G."/>
            <person name="Toriumi M.J."/>
            <person name="Town C.D."/>
            <person name="Utterback T."/>
            <person name="Van Aken S."/>
            <person name="Vaysberg M."/>
            <person name="Vysotskaia V.S."/>
            <person name="Walker M."/>
            <person name="Wu D."/>
            <person name="Yu G."/>
            <person name="Fraser C.M."/>
            <person name="Venter J.C."/>
            <person name="Davis R.W."/>
        </authorList>
    </citation>
    <scope>NUCLEOTIDE SEQUENCE [LARGE SCALE GENOMIC DNA]</scope>
    <source>
        <strain>cv. Columbia</strain>
    </source>
</reference>
<reference key="4">
    <citation type="journal article" date="2017" name="Plant J.">
        <title>Araport11: a complete reannotation of the Arabidopsis thaliana reference genome.</title>
        <authorList>
            <person name="Cheng C.Y."/>
            <person name="Krishnakumar V."/>
            <person name="Chan A.P."/>
            <person name="Thibaud-Nissen F."/>
            <person name="Schobel S."/>
            <person name="Town C.D."/>
        </authorList>
    </citation>
    <scope>GENOME REANNOTATION</scope>
    <source>
        <strain>cv. Columbia</strain>
    </source>
</reference>
<reference key="5">
    <citation type="submission" date="2006-07" db="EMBL/GenBank/DDBJ databases">
        <title>Arabidopsis ORF clones.</title>
        <authorList>
            <person name="Quinitio C."/>
            <person name="Chen H."/>
            <person name="Kim C.J."/>
            <person name="Shinn P."/>
            <person name="Ecker J.R."/>
        </authorList>
    </citation>
    <scope>NUCLEOTIDE SEQUENCE [LARGE SCALE MRNA] (ISOFORM 2)</scope>
    <source>
        <strain>cv. Columbia</strain>
    </source>
</reference>
<reference key="6">
    <citation type="journal article" date="2006" name="Plant Mol. Biol.">
        <title>The MYB transcription factor superfamily of Arabidopsis: expression analysis and phylogenetic comparison with the rice MYB family.</title>
        <authorList>
            <person name="Chen Y."/>
            <person name="Yang X."/>
            <person name="He K."/>
            <person name="Liu M."/>
            <person name="Li J."/>
            <person name="Gao Z."/>
            <person name="Lin Z."/>
            <person name="Zhang Y."/>
            <person name="Wang X."/>
            <person name="Qiu X."/>
            <person name="Shen Y."/>
            <person name="Zhang L."/>
            <person name="Deng X."/>
            <person name="Luo J."/>
            <person name="Deng X.-W."/>
            <person name="Chen Z."/>
            <person name="Gu H."/>
            <person name="Qu L.-J."/>
        </authorList>
    </citation>
    <scope>GENE FAMILY</scope>
</reference>
<reference key="7">
    <citation type="journal article" date="2008" name="Biosci. Biotechnol. Biochem.">
        <title>A small subfamily of Arabidopsis RADIALIS-LIKE SANT/MYB genes: a link to HOOKLESS1-mediated signal transduction during early morphogenesis.</title>
        <authorList>
            <person name="Hamaguchi A."/>
            <person name="Yamashino T."/>
            <person name="Koizumi N."/>
            <person name="Kiba T."/>
            <person name="Kojima M."/>
            <person name="Sakakibara H."/>
            <person name="Mizuno T."/>
        </authorList>
    </citation>
    <scope>GENE FAMILY</scope>
</reference>